<organism>
    <name type="scientific">Pasteurella multocida (strain Pm70)</name>
    <dbReference type="NCBI Taxonomy" id="272843"/>
    <lineage>
        <taxon>Bacteria</taxon>
        <taxon>Pseudomonadati</taxon>
        <taxon>Pseudomonadota</taxon>
        <taxon>Gammaproteobacteria</taxon>
        <taxon>Pasteurellales</taxon>
        <taxon>Pasteurellaceae</taxon>
        <taxon>Pasteurella</taxon>
    </lineage>
</organism>
<gene>
    <name evidence="1" type="primary">ubiD</name>
    <name type="ordered locus">PM0218</name>
</gene>
<protein>
    <recommendedName>
        <fullName evidence="1">3-octaprenyl-4-hydroxybenzoate carboxy-lyase</fullName>
        <ecNumber evidence="1">4.1.1.98</ecNumber>
    </recommendedName>
    <alternativeName>
        <fullName evidence="1">Polyprenyl p-hydroxybenzoate decarboxylase</fullName>
    </alternativeName>
</protein>
<proteinExistence type="inferred from homology"/>
<accession>Q9CP43</accession>
<comment type="function">
    <text evidence="1">Catalyzes the decarboxylation of 3-octaprenyl-4-hydroxy benzoate to 2-octaprenylphenol, an intermediate step in ubiquinone biosynthesis.</text>
</comment>
<comment type="catalytic activity">
    <reaction evidence="1">
        <text>a 4-hydroxy-3-(all-trans-polyprenyl)benzoate + H(+) = a 2-(all-trans-polyprenyl)phenol + CO2</text>
        <dbReference type="Rhea" id="RHEA:41680"/>
        <dbReference type="Rhea" id="RHEA-COMP:9514"/>
        <dbReference type="Rhea" id="RHEA-COMP:9516"/>
        <dbReference type="ChEBI" id="CHEBI:1269"/>
        <dbReference type="ChEBI" id="CHEBI:15378"/>
        <dbReference type="ChEBI" id="CHEBI:16526"/>
        <dbReference type="ChEBI" id="CHEBI:78396"/>
        <dbReference type="EC" id="4.1.1.98"/>
    </reaction>
</comment>
<comment type="cofactor">
    <cofactor evidence="1">
        <name>prenylated FMN</name>
        <dbReference type="ChEBI" id="CHEBI:87746"/>
    </cofactor>
    <text evidence="1">Binds 1 prenylated FMN per subunit.</text>
</comment>
<comment type="cofactor">
    <cofactor evidence="1">
        <name>Mn(2+)</name>
        <dbReference type="ChEBI" id="CHEBI:29035"/>
    </cofactor>
</comment>
<comment type="pathway">
    <text evidence="1">Cofactor biosynthesis; ubiquinone biosynthesis.</text>
</comment>
<comment type="subunit">
    <text evidence="1">Homohexamer.</text>
</comment>
<comment type="subcellular location">
    <subcellularLocation>
        <location evidence="1">Cell membrane</location>
        <topology evidence="1">Peripheral membrane protein</topology>
    </subcellularLocation>
</comment>
<comment type="similarity">
    <text evidence="1">Belongs to the UbiD family.</text>
</comment>
<sequence>MKYKDLRDFLTLLEQRGELKRIKQEIDPHLEMTEIADRTLRAGGPALLFENPKGFDIPVLCNLFGTPKRVAMGMGQEQVSALRDVGKLLAFLKEPEPPKGFKDFLSSIPQFKQVLNMPTKVLGKADCQQVVLKDEDVDLYKLPIMQCWKEDVAPLVTWGLTITKGPLKKRQNLGIYRQQLVAKNKLIMRWLSHRGGALDFQEWKETHPGEPFPVSVALGADPATILGAVTPVPDTLSEYAFAGLLRGTKTSVVKSVSNDLEVPASAEIVLEGYIDPNETALEGPYGDHTGYYNEQEYFPVFTVTHITMRKDPIYHSTYTGRPPDEPAVLGEALNEVFIPILQKQFPEIVDFYLPPEGCSYRLAVVTIKKQYAGHAKRVMMGVWSFLRQFMYTKFVIVCDDDVNARDWKDVIWAMTTRCDPARDLTLVENTPIDYLDFASPVAGLGSKMGIDATNKWPGETQREWGVPIKKDPDVVKRVDEIWDSLAIFENEP</sequence>
<evidence type="ECO:0000255" key="1">
    <source>
        <dbReference type="HAMAP-Rule" id="MF_01636"/>
    </source>
</evidence>
<keyword id="KW-1003">Cell membrane</keyword>
<keyword id="KW-0210">Decarboxylase</keyword>
<keyword id="KW-0285">Flavoprotein</keyword>
<keyword id="KW-0288">FMN</keyword>
<keyword id="KW-0456">Lyase</keyword>
<keyword id="KW-0464">Manganese</keyword>
<keyword id="KW-0472">Membrane</keyword>
<keyword id="KW-0479">Metal-binding</keyword>
<keyword id="KW-1185">Reference proteome</keyword>
<keyword id="KW-0831">Ubiquinone biosynthesis</keyword>
<reference key="1">
    <citation type="journal article" date="2001" name="Proc. Natl. Acad. Sci. U.S.A.">
        <title>Complete genomic sequence of Pasteurella multocida Pm70.</title>
        <authorList>
            <person name="May B.J."/>
            <person name="Zhang Q."/>
            <person name="Li L.L."/>
            <person name="Paustian M.L."/>
            <person name="Whittam T.S."/>
            <person name="Kapur V."/>
        </authorList>
    </citation>
    <scope>NUCLEOTIDE SEQUENCE [LARGE SCALE GENOMIC DNA]</scope>
    <source>
        <strain>Pm70</strain>
    </source>
</reference>
<feature type="chain" id="PRO_0000157363" description="3-octaprenyl-4-hydroxybenzoate carboxy-lyase">
    <location>
        <begin position="1"/>
        <end position="492"/>
    </location>
</feature>
<feature type="active site" description="Proton donor" evidence="1">
    <location>
        <position position="287"/>
    </location>
</feature>
<feature type="binding site" evidence="1">
    <location>
        <position position="172"/>
    </location>
    <ligand>
        <name>Mn(2+)</name>
        <dbReference type="ChEBI" id="CHEBI:29035"/>
    </ligand>
</feature>
<feature type="binding site" evidence="1">
    <location>
        <begin position="175"/>
        <end position="177"/>
    </location>
    <ligand>
        <name>prenylated FMN</name>
        <dbReference type="ChEBI" id="CHEBI:87746"/>
    </ligand>
</feature>
<feature type="binding site" evidence="1">
    <location>
        <begin position="189"/>
        <end position="191"/>
    </location>
    <ligand>
        <name>prenylated FMN</name>
        <dbReference type="ChEBI" id="CHEBI:87746"/>
    </ligand>
</feature>
<feature type="binding site" evidence="1">
    <location>
        <begin position="194"/>
        <end position="195"/>
    </location>
    <ligand>
        <name>prenylated FMN</name>
        <dbReference type="ChEBI" id="CHEBI:87746"/>
    </ligand>
</feature>
<feature type="binding site" evidence="1">
    <location>
        <position position="238"/>
    </location>
    <ligand>
        <name>Mn(2+)</name>
        <dbReference type="ChEBI" id="CHEBI:29035"/>
    </ligand>
</feature>
<dbReference type="EC" id="4.1.1.98" evidence="1"/>
<dbReference type="EMBL" id="AE004439">
    <property type="protein sequence ID" value="AAK02302.1"/>
    <property type="molecule type" value="Genomic_DNA"/>
</dbReference>
<dbReference type="RefSeq" id="WP_005720996.1">
    <property type="nucleotide sequence ID" value="NC_002663.1"/>
</dbReference>
<dbReference type="SMR" id="Q9CP43"/>
<dbReference type="STRING" id="272843.PM0218"/>
<dbReference type="EnsemblBacteria" id="AAK02302">
    <property type="protein sequence ID" value="AAK02302"/>
    <property type="gene ID" value="PM0218"/>
</dbReference>
<dbReference type="KEGG" id="pmu:PM0218"/>
<dbReference type="PATRIC" id="fig|272843.6.peg.225"/>
<dbReference type="HOGENOM" id="CLU_023348_4_1_6"/>
<dbReference type="OrthoDB" id="9809841at2"/>
<dbReference type="UniPathway" id="UPA00232"/>
<dbReference type="Proteomes" id="UP000000809">
    <property type="component" value="Chromosome"/>
</dbReference>
<dbReference type="GO" id="GO:0005829">
    <property type="term" value="C:cytosol"/>
    <property type="evidence" value="ECO:0007669"/>
    <property type="project" value="TreeGrafter"/>
</dbReference>
<dbReference type="GO" id="GO:0005886">
    <property type="term" value="C:plasma membrane"/>
    <property type="evidence" value="ECO:0007669"/>
    <property type="project" value="UniProtKB-SubCell"/>
</dbReference>
<dbReference type="GO" id="GO:0008694">
    <property type="term" value="F:3-octaprenyl-4-hydroxybenzoate carboxy-lyase activity"/>
    <property type="evidence" value="ECO:0007669"/>
    <property type="project" value="UniProtKB-UniRule"/>
</dbReference>
<dbReference type="GO" id="GO:0046872">
    <property type="term" value="F:metal ion binding"/>
    <property type="evidence" value="ECO:0007669"/>
    <property type="project" value="UniProtKB-KW"/>
</dbReference>
<dbReference type="GO" id="GO:0006744">
    <property type="term" value="P:ubiquinone biosynthetic process"/>
    <property type="evidence" value="ECO:0007669"/>
    <property type="project" value="UniProtKB-UniRule"/>
</dbReference>
<dbReference type="FunFam" id="1.20.5.570:FF:000001">
    <property type="entry name" value="3-octaprenyl-4-hydroxybenzoate carboxy-lyase"/>
    <property type="match status" value="1"/>
</dbReference>
<dbReference type="FunFam" id="3.40.1670.10:FF:000001">
    <property type="entry name" value="3-octaprenyl-4-hydroxybenzoate carboxy-lyase"/>
    <property type="match status" value="1"/>
</dbReference>
<dbReference type="Gene3D" id="1.20.5.570">
    <property type="entry name" value="Single helix bin"/>
    <property type="match status" value="1"/>
</dbReference>
<dbReference type="Gene3D" id="3.40.1670.10">
    <property type="entry name" value="UbiD C-terminal domain-like"/>
    <property type="match status" value="1"/>
</dbReference>
<dbReference type="HAMAP" id="MF_01636">
    <property type="entry name" value="UbiD"/>
    <property type="match status" value="1"/>
</dbReference>
<dbReference type="InterPro" id="IPR002830">
    <property type="entry name" value="UbiD"/>
</dbReference>
<dbReference type="InterPro" id="IPR049381">
    <property type="entry name" value="UbiD-like_C"/>
</dbReference>
<dbReference type="InterPro" id="IPR049383">
    <property type="entry name" value="UbiD-like_N"/>
</dbReference>
<dbReference type="InterPro" id="IPR023677">
    <property type="entry name" value="UbiD_bacteria"/>
</dbReference>
<dbReference type="InterPro" id="IPR048304">
    <property type="entry name" value="UbiD_Rift_dom"/>
</dbReference>
<dbReference type="NCBIfam" id="NF008175">
    <property type="entry name" value="PRK10922.1"/>
    <property type="match status" value="1"/>
</dbReference>
<dbReference type="NCBIfam" id="TIGR00148">
    <property type="entry name" value="UbiD family decarboxylase"/>
    <property type="match status" value="1"/>
</dbReference>
<dbReference type="PANTHER" id="PTHR30108">
    <property type="entry name" value="3-OCTAPRENYL-4-HYDROXYBENZOATE CARBOXY-LYASE-RELATED"/>
    <property type="match status" value="1"/>
</dbReference>
<dbReference type="PANTHER" id="PTHR30108:SF17">
    <property type="entry name" value="FERULIC ACID DECARBOXYLASE 1"/>
    <property type="match status" value="1"/>
</dbReference>
<dbReference type="Pfam" id="PF01977">
    <property type="entry name" value="UbiD"/>
    <property type="match status" value="1"/>
</dbReference>
<dbReference type="Pfam" id="PF20696">
    <property type="entry name" value="UbiD_C"/>
    <property type="match status" value="1"/>
</dbReference>
<dbReference type="Pfam" id="PF20695">
    <property type="entry name" value="UbiD_N"/>
    <property type="match status" value="1"/>
</dbReference>
<dbReference type="SUPFAM" id="SSF50475">
    <property type="entry name" value="FMN-binding split barrel"/>
    <property type="match status" value="1"/>
</dbReference>
<dbReference type="SUPFAM" id="SSF143968">
    <property type="entry name" value="UbiD C-terminal domain-like"/>
    <property type="match status" value="1"/>
</dbReference>
<name>UBID_PASMU</name>